<comment type="function">
    <text evidence="1">The heterodimer acts as both an ATP-dependent DNA helicase and an ATP-dependent, dual-direction single-stranded exonuclease. Recognizes the chi site generating a DNA molecule suitable for the initiation of homologous recombination. This subunit has 5' -&gt; 3' nuclease activity but not helicase activity.</text>
</comment>
<comment type="cofactor">
    <cofactor evidence="1">
        <name>Mg(2+)</name>
        <dbReference type="ChEBI" id="CHEBI:18420"/>
    </cofactor>
</comment>
<comment type="subunit">
    <text evidence="1">Heterodimer of AddA and RexB.</text>
</comment>
<comment type="miscellaneous">
    <text evidence="1">Despite having helicase-like domains, this subunit does not have helicase activity.</text>
</comment>
<comment type="similarity">
    <text evidence="1">Belongs to the helicase family. AddB/RexB type 2 subfamily.</text>
</comment>
<comment type="sequence caution" evidence="2">
    <conflict type="erroneous initiation">
        <sequence resource="EMBL-CDS" id="ACB90398"/>
    </conflict>
    <text>Extended N-terminus.</text>
</comment>
<organism>
    <name type="scientific">Streptococcus pneumoniae (strain CGSP14)</name>
    <dbReference type="NCBI Taxonomy" id="516950"/>
    <lineage>
        <taxon>Bacteria</taxon>
        <taxon>Bacillati</taxon>
        <taxon>Bacillota</taxon>
        <taxon>Bacilli</taxon>
        <taxon>Lactobacillales</taxon>
        <taxon>Streptococcaceae</taxon>
        <taxon>Streptococcus</taxon>
    </lineage>
</organism>
<keyword id="KW-0067">ATP-binding</keyword>
<keyword id="KW-0227">DNA damage</keyword>
<keyword id="KW-0234">DNA repair</keyword>
<keyword id="KW-0238">DNA-binding</keyword>
<keyword id="KW-0269">Exonuclease</keyword>
<keyword id="KW-0347">Helicase</keyword>
<keyword id="KW-0378">Hydrolase</keyword>
<keyword id="KW-0540">Nuclease</keyword>
<keyword id="KW-0547">Nucleotide-binding</keyword>
<dbReference type="EC" id="3.1.-.-" evidence="1"/>
<dbReference type="EMBL" id="CP001033">
    <property type="protein sequence ID" value="ACB90398.1"/>
    <property type="status" value="ALT_INIT"/>
    <property type="molecule type" value="Genomic_DNA"/>
</dbReference>
<dbReference type="RefSeq" id="WP_000772324.1">
    <property type="nucleotide sequence ID" value="NC_010582.1"/>
</dbReference>
<dbReference type="SMR" id="B2IPX4"/>
<dbReference type="KEGG" id="spw:SPCG_1146"/>
<dbReference type="HOGENOM" id="CLU_007838_0_0_9"/>
<dbReference type="GO" id="GO:0008409">
    <property type="term" value="F:5'-3' exonuclease activity"/>
    <property type="evidence" value="ECO:0007669"/>
    <property type="project" value="UniProtKB-UniRule"/>
</dbReference>
<dbReference type="GO" id="GO:0005524">
    <property type="term" value="F:ATP binding"/>
    <property type="evidence" value="ECO:0007669"/>
    <property type="project" value="UniProtKB-UniRule"/>
</dbReference>
<dbReference type="GO" id="GO:0003690">
    <property type="term" value="F:double-stranded DNA binding"/>
    <property type="evidence" value="ECO:0007669"/>
    <property type="project" value="UniProtKB-UniRule"/>
</dbReference>
<dbReference type="GO" id="GO:0004386">
    <property type="term" value="F:helicase activity"/>
    <property type="evidence" value="ECO:0007669"/>
    <property type="project" value="UniProtKB-KW"/>
</dbReference>
<dbReference type="GO" id="GO:0016817">
    <property type="term" value="F:hydrolase activity, acting on acid anhydrides"/>
    <property type="evidence" value="ECO:0007669"/>
    <property type="project" value="InterPro"/>
</dbReference>
<dbReference type="GO" id="GO:0000724">
    <property type="term" value="P:double-strand break repair via homologous recombination"/>
    <property type="evidence" value="ECO:0007669"/>
    <property type="project" value="UniProtKB-UniRule"/>
</dbReference>
<dbReference type="FunFam" id="3.40.50.300:FF:002666">
    <property type="entry name" value="ATP-dependent helicase/deoxyribonuclease subunit B"/>
    <property type="match status" value="1"/>
</dbReference>
<dbReference type="FunFam" id="3.40.50.300:FF:002815">
    <property type="entry name" value="ATP-dependent helicase/deoxyribonuclease subunit B"/>
    <property type="match status" value="1"/>
</dbReference>
<dbReference type="Gene3D" id="3.40.50.300">
    <property type="entry name" value="P-loop containing nucleotide triphosphate hydrolases"/>
    <property type="match status" value="4"/>
</dbReference>
<dbReference type="HAMAP" id="MF_01453">
    <property type="entry name" value="AddB_type2"/>
    <property type="match status" value="1"/>
</dbReference>
<dbReference type="InterPro" id="IPR049035">
    <property type="entry name" value="ADDB_N"/>
</dbReference>
<dbReference type="InterPro" id="IPR014141">
    <property type="entry name" value="DNA_helicase_suRexB"/>
</dbReference>
<dbReference type="InterPro" id="IPR027417">
    <property type="entry name" value="P-loop_NTPase"/>
</dbReference>
<dbReference type="InterPro" id="IPR038726">
    <property type="entry name" value="PDDEXK_AddAB-type"/>
</dbReference>
<dbReference type="InterPro" id="IPR011335">
    <property type="entry name" value="Restrct_endonuc-II-like"/>
</dbReference>
<dbReference type="NCBIfam" id="TIGR02774">
    <property type="entry name" value="rexB_recomb"/>
    <property type="match status" value="1"/>
</dbReference>
<dbReference type="PANTHER" id="PTHR30591">
    <property type="entry name" value="RECBCD ENZYME SUBUNIT RECC"/>
    <property type="match status" value="1"/>
</dbReference>
<dbReference type="PANTHER" id="PTHR30591:SF1">
    <property type="entry name" value="RECBCD ENZYME SUBUNIT RECC"/>
    <property type="match status" value="1"/>
</dbReference>
<dbReference type="Pfam" id="PF21445">
    <property type="entry name" value="ADDB_N"/>
    <property type="match status" value="1"/>
</dbReference>
<dbReference type="Pfam" id="PF12705">
    <property type="entry name" value="PDDEXK_1"/>
    <property type="match status" value="1"/>
</dbReference>
<dbReference type="SUPFAM" id="SSF52540">
    <property type="entry name" value="P-loop containing nucleoside triphosphate hydrolases"/>
    <property type="match status" value="1"/>
</dbReference>
<dbReference type="SUPFAM" id="SSF52980">
    <property type="entry name" value="Restriction endonuclease-like"/>
    <property type="match status" value="1"/>
</dbReference>
<proteinExistence type="inferred from homology"/>
<accession>B2IPX4</accession>
<evidence type="ECO:0000255" key="1">
    <source>
        <dbReference type="HAMAP-Rule" id="MF_01453"/>
    </source>
</evidence>
<evidence type="ECO:0000305" key="2"/>
<sequence>MKLLYTDIRTSLTEILTREAEELVAAGKRVFYIAPNSLSFEKERAVLECLSQQASFSITVTRFAQMARYLVLNDLPAKTILDDIGLGLAFYKCLAELNPKDLRVYGAIKQDPQLIQQLIELYHEMTKSQMNFLDLENLTDEDKRADLLLIFEKVTAYLNQGQLAQGSQLSHLIEAIENDKVSSDFNQIALVIDGFTRFSAEEERVVDLLHGKGVEIVIGAYASKKAYTSPFSEGNLYQASVKFLHHLASKYQTPAQDCSQTHEKMDSFDKASRLLESSYDFSELALDVDEKDRENLQIWSCLTQKEELELVARSIRQKLHENSDLSYKHFRILLGDVASYQLSLKTIFDQYQIPFYLGRSEAMAHHPLTQFVESILALKRYRFRQEDLINLLRTDLYTDLSQSDIDAFEQYIRYLGINGLPAFQQTFTKSHHGKFNLERLNVLRLRILAPLETLFASRKQKAENLLQKWSVFLKEGAVTKQLQDLTTTLEAVEQERQAEVWKAFCHVLEQFATVFAGSQVSLEDFLALLHSGMSLSQYRTIPATVDTVLVQSYDLIAPLTADFVYAIGLTQDNLPKISQNTSLLTDEERQNLNQATEEGVQLLIASSENLKKNRYTMLSLVNSARKQLFLSAPSLFNESESKESAYLQELIHFGFRRREKRMNHKGLSKEDMGSYHSLLSSLVAYHQQGEMSDTEQDLTFVKVLSRVIGKKLDQQGLENPAIPTSPSSKTLAKDTLQALYPAKQEFYLSTSGLTEFYRNEYSYFLRYVLGLQEELRLHPDARSHGNFLHRIFERALQLPNEDSFDQRLEQAIQETSQEREFEAIYQESLEAQFTKEVLLDVARTTGHILRHNPAIETIKEEANFGGKDQAFIQLDNGRSVFVRGKVDRIDRLKANGAIGVVDYKSSLTQFQFPHFFNGLNSQLPTYLAALKREGEQNFFGAMYLEMAEPVQSLMAVKSLAGAVVEASKSMKYQGLFLEKESSYLGEFYNKNKANQLTDEEFQLLLDYNAYLYKKAAEKILAGRFAINPYTENGRSIAPYVQQHQAITGFEANYHLGQARFLEKLDLADGKRLVGEKLKQAWLEKIREELNR</sequence>
<reference key="1">
    <citation type="journal article" date="2009" name="BMC Genomics">
        <title>Genome evolution driven by host adaptations results in a more virulent and antimicrobial-resistant Streptococcus pneumoniae serotype 14.</title>
        <authorList>
            <person name="Ding F."/>
            <person name="Tang P."/>
            <person name="Hsu M.-H."/>
            <person name="Cui P."/>
            <person name="Hu S."/>
            <person name="Yu J."/>
            <person name="Chiu C.-H."/>
        </authorList>
    </citation>
    <scope>NUCLEOTIDE SEQUENCE [LARGE SCALE GENOMIC DNA]</scope>
    <source>
        <strain>CGSP14</strain>
    </source>
</reference>
<name>ADDB_STRPS</name>
<feature type="chain" id="PRO_0000379397" description="ATP-dependent helicase/deoxyribonuclease subunit B">
    <location>
        <begin position="1"/>
        <end position="1091"/>
    </location>
</feature>
<gene>
    <name evidence="1" type="primary">rexB</name>
    <name type="ordered locus">SPCG_1146</name>
</gene>
<protein>
    <recommendedName>
        <fullName evidence="1">ATP-dependent helicase/deoxyribonuclease subunit B</fullName>
        <ecNumber evidence="1">3.1.-.-</ecNumber>
    </recommendedName>
    <alternativeName>
        <fullName evidence="1">ATP-dependent helicase/nuclease subunit RexB</fullName>
    </alternativeName>
</protein>